<accession>P15972</accession>
<accession>Q0VE22</accession>
<dbReference type="EMBL" id="X12808">
    <property type="protein sequence ID" value="CAB42648.1"/>
    <property type="molecule type" value="mRNA"/>
</dbReference>
<dbReference type="EMBL" id="BC119390">
    <property type="protein sequence ID" value="AAI19391.1"/>
    <property type="molecule type" value="mRNA"/>
</dbReference>
<dbReference type="EMBL" id="BC119392">
    <property type="protein sequence ID" value="AAI19393.1"/>
    <property type="molecule type" value="mRNA"/>
</dbReference>
<dbReference type="PIR" id="S02188">
    <property type="entry name" value="S02188"/>
</dbReference>
<dbReference type="PaxDb" id="10090-ENSMUSP00000062790"/>
<dbReference type="AGR" id="MGI:104524"/>
<dbReference type="MGI" id="MGI:104524">
    <property type="gene designation" value="Phxr2"/>
</dbReference>
<dbReference type="VEuPathDB" id="HostDB:ENSMUSG00000055108"/>
<dbReference type="HOGENOM" id="CLU_2849075_0_0_1"/>
<dbReference type="InParanoid" id="P15972"/>
<dbReference type="PRO" id="PR:P15972"/>
<dbReference type="Proteomes" id="UP000000589">
    <property type="component" value="Chromosome 10"/>
</dbReference>
<dbReference type="RNAct" id="P15972">
    <property type="molecule type" value="protein"/>
</dbReference>
<dbReference type="Bgee" id="ENSMUSG00000055108">
    <property type="expression patterns" value="Expressed in embryonic post-anal tail and 3 other cell types or tissues"/>
</dbReference>
<proteinExistence type="predicted"/>
<keyword id="KW-1185">Reference proteome</keyword>
<reference key="1">
    <citation type="journal article" date="1988" name="Nucleic Acids Res.">
        <title>Mouse spleen derived cDNA clones containing per repeat sequence.</title>
        <authorList>
            <person name="Nishimatsu S."/>
            <person name="Murakami K."/>
            <person name="Mitsui Y."/>
            <person name="Ishida N."/>
        </authorList>
    </citation>
    <scope>NUCLEOTIDE SEQUENCE [MRNA]</scope>
    <source>
        <tissue>Spleen</tissue>
    </source>
</reference>
<reference key="2">
    <citation type="journal article" date="2004" name="Genome Res.">
        <title>The status, quality, and expansion of the NIH full-length cDNA project: the Mammalian Gene Collection (MGC).</title>
        <authorList>
            <consortium name="The MGC Project Team"/>
        </authorList>
    </citation>
    <scope>NUCLEOTIDE SEQUENCE [LARGE SCALE MRNA]</scope>
    <source>
        <tissue>Brain</tissue>
    </source>
</reference>
<protein>
    <recommendedName>
        <fullName>Putative per-hexamer repeat protein 2</fullName>
    </recommendedName>
</protein>
<feature type="chain" id="PRO_0000058413" description="Putative per-hexamer repeat protein 2">
    <location>
        <begin position="1"/>
        <end position="65"/>
    </location>
</feature>
<name>PHXR2_MOUSE</name>
<gene>
    <name type="primary">Phxr2</name>
</gene>
<sequence>MLTLQSSGTGQRKVAVHMGLLENISLKISKEVGGLYDTRMAQQGQLLKLLVGTVRKWDHSFFMDL</sequence>
<organism>
    <name type="scientific">Mus musculus</name>
    <name type="common">Mouse</name>
    <dbReference type="NCBI Taxonomy" id="10090"/>
    <lineage>
        <taxon>Eukaryota</taxon>
        <taxon>Metazoa</taxon>
        <taxon>Chordata</taxon>
        <taxon>Craniata</taxon>
        <taxon>Vertebrata</taxon>
        <taxon>Euteleostomi</taxon>
        <taxon>Mammalia</taxon>
        <taxon>Eutheria</taxon>
        <taxon>Euarchontoglires</taxon>
        <taxon>Glires</taxon>
        <taxon>Rodentia</taxon>
        <taxon>Myomorpha</taxon>
        <taxon>Muroidea</taxon>
        <taxon>Muridae</taxon>
        <taxon>Murinae</taxon>
        <taxon>Mus</taxon>
        <taxon>Mus</taxon>
    </lineage>
</organism>